<accession>P82271</accession>
<dbReference type="EMBL" id="AF191101">
    <property type="protein sequence ID" value="AAF04390.1"/>
    <property type="molecule type" value="mRNA"/>
</dbReference>
<dbReference type="EMBL" id="AF191103">
    <property type="protein sequence ID" value="AAF04392.1"/>
    <property type="molecule type" value="Genomic_DNA"/>
</dbReference>
<dbReference type="EMBL" id="AF184156">
    <property type="protein sequence ID" value="AAF07923.1"/>
    <property type="molecule type" value="mRNA"/>
</dbReference>
<dbReference type="PIR" id="B59089">
    <property type="entry name" value="B59089"/>
</dbReference>
<dbReference type="RefSeq" id="NP_001027990.1">
    <property type="nucleotide sequence ID" value="NM_001032818.1"/>
</dbReference>
<dbReference type="PDB" id="2LYF">
    <property type="method" value="NMR"/>
    <property type="chains" value="A=65-73"/>
</dbReference>
<dbReference type="PDBsum" id="2LYF"/>
<dbReference type="STRING" id="9544.ENSMMUP00000076383"/>
<dbReference type="PaxDb" id="9544-ENSMMUP00000024364"/>
<dbReference type="GeneID" id="574123"/>
<dbReference type="KEGG" id="mcc:574123"/>
<dbReference type="CTD" id="574123"/>
<dbReference type="eggNOG" id="ENOG502TEA8">
    <property type="taxonomic scope" value="Eukaryota"/>
</dbReference>
<dbReference type="HOGENOM" id="CLU_160803_2_0_1"/>
<dbReference type="InParanoid" id="P82271"/>
<dbReference type="Proteomes" id="UP000006718">
    <property type="component" value="Unassembled WGS sequence"/>
</dbReference>
<dbReference type="GO" id="GO:0005615">
    <property type="term" value="C:extracellular space"/>
    <property type="evidence" value="ECO:0000318"/>
    <property type="project" value="GO_Central"/>
</dbReference>
<dbReference type="GO" id="GO:0019731">
    <property type="term" value="P:antibacterial humoral response"/>
    <property type="evidence" value="ECO:0000318"/>
    <property type="project" value="GO_Central"/>
</dbReference>
<dbReference type="GO" id="GO:0061844">
    <property type="term" value="P:antimicrobial humoral immune response mediated by antimicrobial peptide"/>
    <property type="evidence" value="ECO:0000318"/>
    <property type="project" value="GO_Central"/>
</dbReference>
<dbReference type="GO" id="GO:0071222">
    <property type="term" value="P:cellular response to lipopolysaccharide"/>
    <property type="evidence" value="ECO:0000318"/>
    <property type="project" value="GO_Central"/>
</dbReference>
<dbReference type="GO" id="GO:0050832">
    <property type="term" value="P:defense response to fungus"/>
    <property type="evidence" value="ECO:0000314"/>
    <property type="project" value="UniProtKB"/>
</dbReference>
<dbReference type="GO" id="GO:0050829">
    <property type="term" value="P:defense response to Gram-negative bacterium"/>
    <property type="evidence" value="ECO:0000314"/>
    <property type="project" value="UniProtKB"/>
</dbReference>
<dbReference type="GO" id="GO:0050830">
    <property type="term" value="P:defense response to Gram-positive bacterium"/>
    <property type="evidence" value="ECO:0000314"/>
    <property type="project" value="UniProtKB"/>
</dbReference>
<dbReference type="GO" id="GO:0051673">
    <property type="term" value="P:disruption of plasma membrane integrity in another organism"/>
    <property type="evidence" value="ECO:0000318"/>
    <property type="project" value="GO_Central"/>
</dbReference>
<dbReference type="GO" id="GO:0002227">
    <property type="term" value="P:innate immune response in mucosa"/>
    <property type="evidence" value="ECO:0000318"/>
    <property type="project" value="GO_Central"/>
</dbReference>
<dbReference type="GO" id="GO:0031640">
    <property type="term" value="P:killing of cells of another organism"/>
    <property type="evidence" value="ECO:0007669"/>
    <property type="project" value="UniProtKB-KW"/>
</dbReference>
<dbReference type="InterPro" id="IPR016327">
    <property type="entry name" value="Alpha-defensin"/>
</dbReference>
<dbReference type="InterPro" id="IPR002366">
    <property type="entry name" value="Alpha-defensin_N"/>
</dbReference>
<dbReference type="PANTHER" id="PTHR11876">
    <property type="entry name" value="ALPHA-DEFENSIN 1"/>
    <property type="match status" value="1"/>
</dbReference>
<dbReference type="PANTHER" id="PTHR11876:SF34">
    <property type="entry name" value="DEMIDEFENSIN-3"/>
    <property type="match status" value="1"/>
</dbReference>
<dbReference type="Pfam" id="PF00879">
    <property type="entry name" value="Defensin_propep"/>
    <property type="match status" value="1"/>
</dbReference>
<dbReference type="PIRSF" id="PIRSF001875">
    <property type="entry name" value="Alpha-defensin"/>
    <property type="match status" value="1"/>
</dbReference>
<dbReference type="SMART" id="SM01418">
    <property type="entry name" value="Defensin_propep"/>
    <property type="match status" value="1"/>
</dbReference>
<gene>
    <name type="primary">RTD1B</name>
</gene>
<sequence length="76" mass="8189">MRTFALLTAMLLLVALHAQAEARQARADEAAAQQQPGADDQGMAHSFTRPENAALPLSESARGLRCLCRRGVCQLL</sequence>
<name>RTD1B_MACMU</name>
<protein>
    <recommendedName>
        <fullName>Rhesus theta defensin-1/2 subunit B</fullName>
        <shortName>RTD-1 subunit B</shortName>
        <shortName>RTD-1b</shortName>
    </recommendedName>
    <alternativeName>
        <fullName>Demidefensin-1</fullName>
    </alternativeName>
    <alternativeName>
        <fullName>RTD-2</fullName>
    </alternativeName>
</protein>
<keyword id="KW-0002">3D-structure</keyword>
<keyword id="KW-0044">Antibiotic</keyword>
<keyword id="KW-0929">Antimicrobial</keyword>
<keyword id="KW-0211">Defensin</keyword>
<keyword id="KW-0903">Direct protein sequencing</keyword>
<keyword id="KW-1015">Disulfide bond</keyword>
<keyword id="KW-0295">Fungicide</keyword>
<keyword id="KW-1185">Reference proteome</keyword>
<keyword id="KW-0732">Signal</keyword>
<feature type="signal peptide" evidence="1">
    <location>
        <begin position="1"/>
        <end position="22"/>
    </location>
</feature>
<feature type="propeptide" id="PRO_0000006874" evidence="1 3">
    <location>
        <begin position="23"/>
        <end position="64"/>
    </location>
</feature>
<feature type="peptide" id="PRO_0000006875" description="Rhesus theta defensin-1/2 subunit B">
    <location>
        <begin position="65"/>
        <end position="73"/>
    </location>
</feature>
<feature type="propeptide" id="PRO_0000006876" evidence="3">
    <location>
        <begin position="74"/>
        <end position="76"/>
    </location>
</feature>
<feature type="region of interest" description="Disordered" evidence="2">
    <location>
        <begin position="25"/>
        <end position="54"/>
    </location>
</feature>
<feature type="compositionally biased region" description="Low complexity" evidence="2">
    <location>
        <begin position="30"/>
        <end position="44"/>
    </location>
</feature>
<feature type="disulfide bond" description="Interchain (with C-66 in subunit A); in form RTD-1" evidence="3 5">
    <location>
        <position position="66"/>
    </location>
</feature>
<feature type="disulfide bond" description="Interchain (with C-66 in subunit B); in form RTD-2" evidence="3">
    <location>
        <position position="66"/>
    </location>
</feature>
<feature type="disulfide bond" evidence="3 5">
    <location>
        <begin position="68"/>
        <end position="73"/>
    </location>
</feature>
<feature type="cross-link" description="Cyclopeptide (Arg-Cys) (interchain with C-73 in subunit A); in form RTD-1">
    <location>
        <position position="65"/>
    </location>
</feature>
<feature type="cross-link" description="Cyclopeptide (Arg-Cys) (interchain with C-73 in subunit B); in form RTD-2">
    <location>
        <position position="65"/>
    </location>
</feature>
<feature type="cross-link" description="Cyclopeptide (Cys-Arg) (interchain with R-65 in subunit A); in form RTD-1">
    <location>
        <position position="73"/>
    </location>
</feature>
<feature type="cross-link" description="Cyclopeptide (Cys-Arg) (interchain with R-65 in subunit B); in form RTD-2">
    <location>
        <position position="73"/>
    </location>
</feature>
<proteinExistence type="evidence at protein level"/>
<organism>
    <name type="scientific">Macaca mulatta</name>
    <name type="common">Rhesus macaque</name>
    <dbReference type="NCBI Taxonomy" id="9544"/>
    <lineage>
        <taxon>Eukaryota</taxon>
        <taxon>Metazoa</taxon>
        <taxon>Chordata</taxon>
        <taxon>Craniata</taxon>
        <taxon>Vertebrata</taxon>
        <taxon>Euteleostomi</taxon>
        <taxon>Mammalia</taxon>
        <taxon>Eutheria</taxon>
        <taxon>Euarchontoglires</taxon>
        <taxon>Primates</taxon>
        <taxon>Haplorrhini</taxon>
        <taxon>Catarrhini</taxon>
        <taxon>Cercopithecidae</taxon>
        <taxon>Cercopithecinae</taxon>
        <taxon>Macaca</taxon>
    </lineage>
</organism>
<evidence type="ECO:0000255" key="1"/>
<evidence type="ECO:0000256" key="2">
    <source>
        <dbReference type="SAM" id="MobiDB-lite"/>
    </source>
</evidence>
<evidence type="ECO:0000269" key="3">
    <source>
    </source>
</evidence>
<evidence type="ECO:0000269" key="4">
    <source>
    </source>
</evidence>
<evidence type="ECO:0000269" key="5">
    <source>
    </source>
</evidence>
<evidence type="ECO:0000305" key="6"/>
<comment type="function">
    <text evidence="4">RTD-1 and RTD-2 have similar antimicrobial activities against the Gram-positive bacteria S.aureus 502A and L.monocytogenes, the Gram-negative bacterium S.typhimurium, and the fungi C.albicans 16820 and C.neoformans 271A. RTD-2 is 2-3-fold less active than RTD-1 against E.coli ML35.</text>
</comment>
<comment type="subunit">
    <text evidence="3 5">RTD-1 is a cyclic heterodimer composed of subunits A and B; disulfide-linked. RTD-2 is a cyclic homodimer composed of two subunits B; disulfide-linked.</text>
</comment>
<comment type="tissue specificity">
    <text evidence="3">RTD-1 is expressed in bone marrow. Detected in promyelocytes, myelocytes and mature neutrophils and monocytes.</text>
</comment>
<comment type="developmental stage">
    <text evidence="3">RTD-1 expression begins early during granulocyte myelopoiesis.</text>
</comment>
<comment type="PTM">
    <text evidence="3 5">Forms a cyclic peptide with 1 subunit B (RTD-2) or with 1 subunit A (RTD-1). An additional intersubunit disulfide bond is formed.</text>
</comment>
<comment type="mass spectrometry" mass="2083.0" method="MALDI" evidence="4">
    <text>RTD-1, heterodimer, cyclized and oxidized.</text>
</comment>
<comment type="mass spectrometry" mass="2087.9" method="MALDI" evidence="4">
    <text>RTD-2, homodimer, cyclized and oxidized.</text>
</comment>
<comment type="mass spectrometry" mass="2087.7" method="MALDI" evidence="4">
    <text>RTD-1, heterodimer and reduced.</text>
</comment>
<comment type="mass spectrometry" mass="2094.89" method="MALDI" evidence="4">
    <text>RTD-2, homodimer and reduced.</text>
</comment>
<comment type="miscellaneous">
    <text>RTD-1 is 10-fold more present in cells than RTD-2.</text>
</comment>
<comment type="similarity">
    <text evidence="6">Belongs to the alpha-defensin family. Theta subfamily.</text>
</comment>
<reference key="1">
    <citation type="journal article" date="1999" name="Science">
        <title>A cyclic antimicrobial peptide produced in primate leukocytes by the ligation of two truncated alpha-defensins.</title>
        <authorList>
            <person name="Tang Y.-Q."/>
            <person name="Yuan J."/>
            <person name="Oesapay G."/>
            <person name="Oesapay K."/>
            <person name="Tran D."/>
            <person name="Miller C.J."/>
            <person name="Ouellette A.J."/>
            <person name="Selsted M.E."/>
        </authorList>
    </citation>
    <scope>NUCLEOTIDE SEQUENCE [GENOMIC DNA / MRNA]</scope>
    <scope>PROTEIN SEQUENCE OF 65-73</scope>
    <scope>SYNTHESIS OF 65-73</scope>
    <scope>TISSUE SPECIFICITY</scope>
    <scope>DEVELOPMENTAL STAGE</scope>
    <scope>DISULFIDE BONDS</scope>
    <source>
        <tissue evidence="3">Bone marrow</tissue>
        <tissue evidence="3">Leukocyte</tissue>
    </source>
</reference>
<reference key="2">
    <citation type="journal article" date="2001" name="J. Leukoc. Biol.">
        <title>Circular minidefensins and posttranslational generation of molecular diversity.</title>
        <authorList>
            <person name="Leonova L."/>
            <person name="Kokryakov V.N."/>
            <person name="Aleshina G."/>
            <person name="Hong T."/>
            <person name="Nguyen T."/>
            <person name="Zhao C."/>
            <person name="Waring A.J."/>
            <person name="Lehrer R.I."/>
        </authorList>
    </citation>
    <scope>NUCLEOTIDE SEQUENCE [MRNA]</scope>
    <scope>SYNTHESIS OF RTD-1 AND RTD-2</scope>
    <source>
        <tissue>Bone marrow</tissue>
    </source>
</reference>
<reference key="3">
    <citation type="journal article" date="2002" name="J. Biol. Chem.">
        <title>Homodimeric theta-defensins from rhesus macaque leukocytes: isolation, synthesis, antimicrobial activities, and bacterial binding properties of the cyclic peptides.</title>
        <authorList>
            <person name="Tran D."/>
            <person name="Tran P.A."/>
            <person name="Tang Y.-Q."/>
            <person name="Yuan J."/>
            <person name="Cole T."/>
            <person name="Selsted M.E."/>
        </authorList>
    </citation>
    <scope>PROTEIN SEQUENCE OF 65-73</scope>
    <scope>SYNTHESIS OF RTD-2</scope>
    <scope>FUNCTION OF RTD-1 AND RTD-2</scope>
    <scope>MASS SPECTROMETRY</scope>
    <source>
        <tissue>Leukocyte</tissue>
    </source>
</reference>
<reference key="4">
    <citation type="journal article" date="2012" name="Biochemistry">
        <title>Structural characterization of the cyclic cystine ladder motif of theta-defensins.</title>
        <authorList>
            <person name="Conibear A.C."/>
            <person name="Rosengren K.J."/>
            <person name="Harvey P.J."/>
            <person name="Craik D.J."/>
        </authorList>
    </citation>
    <scope>STRUCTURE BY NMR OF 65-73</scope>
    <scope>DISULFIDE BOND</scope>
    <scope>SYNTHESIS OF RTD-1</scope>
    <scope>SUBUNIT</scope>
</reference>